<comment type="function">
    <text evidence="1">This protein is one of the two subunits of integration host factor, a specific DNA-binding protein that functions in genetic recombination as well as in transcriptional and translational control.</text>
</comment>
<comment type="subunit">
    <text evidence="1">Heterodimer of an alpha and a beta chain.</text>
</comment>
<comment type="similarity">
    <text evidence="2">Belongs to the bacterial histone-like protein family.</text>
</comment>
<sequence length="94" mass="10454">MTKSELMEKLSAKQPTLPAKEIENMVKGILEFISQSLENGDRVEVRGFGSFSLHHRQPRLGRNPKTGDSVNLSAKSVPYFKAGKELKARVDVQA</sequence>
<name>IHFB_HAEIN</name>
<keyword id="KW-0233">DNA recombination</keyword>
<keyword id="KW-0238">DNA-binding</keyword>
<keyword id="KW-1185">Reference proteome</keyword>
<keyword id="KW-0804">Transcription</keyword>
<keyword id="KW-0805">Transcription regulation</keyword>
<keyword id="KW-0810">Translation regulation</keyword>
<proteinExistence type="inferred from homology"/>
<dbReference type="EMBL" id="L42023">
    <property type="protein sequence ID" value="AAC22874.1"/>
    <property type="molecule type" value="Genomic_DNA"/>
</dbReference>
<dbReference type="PIR" id="A64111">
    <property type="entry name" value="A64111"/>
</dbReference>
<dbReference type="RefSeq" id="NP_439377.1">
    <property type="nucleotide sequence ID" value="NC_000907.1"/>
</dbReference>
<dbReference type="SMR" id="P43724"/>
<dbReference type="STRING" id="71421.HI_1221"/>
<dbReference type="EnsemblBacteria" id="AAC22874">
    <property type="protein sequence ID" value="AAC22874"/>
    <property type="gene ID" value="HI_1221"/>
</dbReference>
<dbReference type="KEGG" id="hin:HI_1221"/>
<dbReference type="PATRIC" id="fig|71421.8.peg.1273"/>
<dbReference type="eggNOG" id="COG0776">
    <property type="taxonomic scope" value="Bacteria"/>
</dbReference>
<dbReference type="HOGENOM" id="CLU_105066_2_0_6"/>
<dbReference type="OrthoDB" id="9804203at2"/>
<dbReference type="PhylomeDB" id="P43724"/>
<dbReference type="BioCyc" id="HINF71421:G1GJ1-1252-MONOMER"/>
<dbReference type="Proteomes" id="UP000000579">
    <property type="component" value="Chromosome"/>
</dbReference>
<dbReference type="GO" id="GO:0005694">
    <property type="term" value="C:chromosome"/>
    <property type="evidence" value="ECO:0007669"/>
    <property type="project" value="InterPro"/>
</dbReference>
<dbReference type="GO" id="GO:0005829">
    <property type="term" value="C:cytosol"/>
    <property type="evidence" value="ECO:0000318"/>
    <property type="project" value="GO_Central"/>
</dbReference>
<dbReference type="GO" id="GO:0003677">
    <property type="term" value="F:DNA binding"/>
    <property type="evidence" value="ECO:0000318"/>
    <property type="project" value="GO_Central"/>
</dbReference>
<dbReference type="GO" id="GO:0030527">
    <property type="term" value="F:structural constituent of chromatin"/>
    <property type="evidence" value="ECO:0007669"/>
    <property type="project" value="InterPro"/>
</dbReference>
<dbReference type="GO" id="GO:0006310">
    <property type="term" value="P:DNA recombination"/>
    <property type="evidence" value="ECO:0007669"/>
    <property type="project" value="UniProtKB-UniRule"/>
</dbReference>
<dbReference type="GO" id="GO:0006355">
    <property type="term" value="P:regulation of DNA-templated transcription"/>
    <property type="evidence" value="ECO:0007669"/>
    <property type="project" value="UniProtKB-UniRule"/>
</dbReference>
<dbReference type="GO" id="GO:0006417">
    <property type="term" value="P:regulation of translation"/>
    <property type="evidence" value="ECO:0007669"/>
    <property type="project" value="UniProtKB-UniRule"/>
</dbReference>
<dbReference type="CDD" id="cd13836">
    <property type="entry name" value="IHF_B"/>
    <property type="match status" value="1"/>
</dbReference>
<dbReference type="FunFam" id="4.10.520.10:FF:000003">
    <property type="entry name" value="Integration host factor subunit beta"/>
    <property type="match status" value="1"/>
</dbReference>
<dbReference type="Gene3D" id="4.10.520.10">
    <property type="entry name" value="IHF-like DNA-binding proteins"/>
    <property type="match status" value="1"/>
</dbReference>
<dbReference type="HAMAP" id="MF_00381">
    <property type="entry name" value="IHF_beta"/>
    <property type="match status" value="1"/>
</dbReference>
<dbReference type="InterPro" id="IPR000119">
    <property type="entry name" value="Hist_DNA-bd"/>
</dbReference>
<dbReference type="InterPro" id="IPR020816">
    <property type="entry name" value="Histone-like_DNA-bd_CS"/>
</dbReference>
<dbReference type="InterPro" id="IPR010992">
    <property type="entry name" value="IHF-like_DNA-bd_dom_sf"/>
</dbReference>
<dbReference type="InterPro" id="IPR005685">
    <property type="entry name" value="IHF_beta"/>
</dbReference>
<dbReference type="NCBIfam" id="TIGR00988">
    <property type="entry name" value="hip"/>
    <property type="match status" value="1"/>
</dbReference>
<dbReference type="NCBIfam" id="NF001222">
    <property type="entry name" value="PRK00199.1"/>
    <property type="match status" value="1"/>
</dbReference>
<dbReference type="PANTHER" id="PTHR33175">
    <property type="entry name" value="DNA-BINDING PROTEIN HU"/>
    <property type="match status" value="1"/>
</dbReference>
<dbReference type="PANTHER" id="PTHR33175:SF5">
    <property type="entry name" value="INTEGRATION HOST FACTOR SUBUNIT BETA"/>
    <property type="match status" value="1"/>
</dbReference>
<dbReference type="Pfam" id="PF00216">
    <property type="entry name" value="Bac_DNA_binding"/>
    <property type="match status" value="1"/>
</dbReference>
<dbReference type="PRINTS" id="PR01727">
    <property type="entry name" value="DNABINDINGHU"/>
</dbReference>
<dbReference type="SMART" id="SM00411">
    <property type="entry name" value="BHL"/>
    <property type="match status" value="1"/>
</dbReference>
<dbReference type="SUPFAM" id="SSF47729">
    <property type="entry name" value="IHF-like DNA-binding proteins"/>
    <property type="match status" value="1"/>
</dbReference>
<dbReference type="PROSITE" id="PS00045">
    <property type="entry name" value="HISTONE_LIKE"/>
    <property type="match status" value="1"/>
</dbReference>
<feature type="chain" id="PRO_0000105053" description="Integration host factor subunit beta">
    <location>
        <begin position="1"/>
        <end position="94"/>
    </location>
</feature>
<organism>
    <name type="scientific">Haemophilus influenzae (strain ATCC 51907 / DSM 11121 / KW20 / Rd)</name>
    <dbReference type="NCBI Taxonomy" id="71421"/>
    <lineage>
        <taxon>Bacteria</taxon>
        <taxon>Pseudomonadati</taxon>
        <taxon>Pseudomonadota</taxon>
        <taxon>Gammaproteobacteria</taxon>
        <taxon>Pasteurellales</taxon>
        <taxon>Pasteurellaceae</taxon>
        <taxon>Haemophilus</taxon>
    </lineage>
</organism>
<reference key="1">
    <citation type="journal article" date="1995" name="Science">
        <title>Whole-genome random sequencing and assembly of Haemophilus influenzae Rd.</title>
        <authorList>
            <person name="Fleischmann R.D."/>
            <person name="Adams M.D."/>
            <person name="White O."/>
            <person name="Clayton R.A."/>
            <person name="Kirkness E.F."/>
            <person name="Kerlavage A.R."/>
            <person name="Bult C.J."/>
            <person name="Tomb J.-F."/>
            <person name="Dougherty B.A."/>
            <person name="Merrick J.M."/>
            <person name="McKenney K."/>
            <person name="Sutton G.G."/>
            <person name="FitzHugh W."/>
            <person name="Fields C.A."/>
            <person name="Gocayne J.D."/>
            <person name="Scott J.D."/>
            <person name="Shirley R."/>
            <person name="Liu L.-I."/>
            <person name="Glodek A."/>
            <person name="Kelley J.M."/>
            <person name="Weidman J.F."/>
            <person name="Phillips C.A."/>
            <person name="Spriggs T."/>
            <person name="Hedblom E."/>
            <person name="Cotton M.D."/>
            <person name="Utterback T.R."/>
            <person name="Hanna M.C."/>
            <person name="Nguyen D.T."/>
            <person name="Saudek D.M."/>
            <person name="Brandon R.C."/>
            <person name="Fine L.D."/>
            <person name="Fritchman J.L."/>
            <person name="Fuhrmann J.L."/>
            <person name="Geoghagen N.S.M."/>
            <person name="Gnehm C.L."/>
            <person name="McDonald L.A."/>
            <person name="Small K.V."/>
            <person name="Fraser C.M."/>
            <person name="Smith H.O."/>
            <person name="Venter J.C."/>
        </authorList>
    </citation>
    <scope>NUCLEOTIDE SEQUENCE [LARGE SCALE GENOMIC DNA]</scope>
    <source>
        <strain>ATCC 51907 / DSM 11121 / KW20 / Rd</strain>
    </source>
</reference>
<accession>P43724</accession>
<gene>
    <name type="primary">ihfB</name>
    <name type="synonym">himD</name>
    <name type="ordered locus">HI_1221</name>
</gene>
<protein>
    <recommendedName>
        <fullName>Integration host factor subunit beta</fullName>
        <shortName>IHF-beta</shortName>
    </recommendedName>
</protein>
<evidence type="ECO:0000250" key="1"/>
<evidence type="ECO:0000305" key="2"/>